<keyword id="KW-0963">Cytoplasm</keyword>
<keyword id="KW-0312">Gluconeogenesis</keyword>
<keyword id="KW-0324">Glycolysis</keyword>
<keyword id="KW-0413">Isomerase</keyword>
<comment type="function">
    <text evidence="1">Involved in the gluconeogenesis. Catalyzes stereospecifically the conversion of dihydroxyacetone phosphate (DHAP) to D-glyceraldehyde-3-phosphate (G3P).</text>
</comment>
<comment type="catalytic activity">
    <reaction evidence="1">
        <text>D-glyceraldehyde 3-phosphate = dihydroxyacetone phosphate</text>
        <dbReference type="Rhea" id="RHEA:18585"/>
        <dbReference type="ChEBI" id="CHEBI:57642"/>
        <dbReference type="ChEBI" id="CHEBI:59776"/>
        <dbReference type="EC" id="5.3.1.1"/>
    </reaction>
</comment>
<comment type="pathway">
    <text evidence="1">Carbohydrate biosynthesis; gluconeogenesis.</text>
</comment>
<comment type="pathway">
    <text evidence="1">Carbohydrate degradation; glycolysis; D-glyceraldehyde 3-phosphate from glycerone phosphate: step 1/1.</text>
</comment>
<comment type="subunit">
    <text evidence="1">Homodimer.</text>
</comment>
<comment type="subcellular location">
    <subcellularLocation>
        <location evidence="1">Cytoplasm</location>
    </subcellularLocation>
</comment>
<comment type="similarity">
    <text evidence="1">Belongs to the triosephosphate isomerase family.</text>
</comment>
<name>TPIS_VIBSA</name>
<feature type="chain" id="PRO_0000090316" description="Triosephosphate isomerase">
    <location>
        <begin position="1"/>
        <end position="251"/>
    </location>
</feature>
<feature type="active site" description="Electrophile" evidence="1">
    <location>
        <position position="95"/>
    </location>
</feature>
<feature type="active site" description="Proton acceptor" evidence="1">
    <location>
        <position position="167"/>
    </location>
</feature>
<feature type="binding site" evidence="1">
    <location>
        <begin position="9"/>
        <end position="11"/>
    </location>
    <ligand>
        <name>substrate</name>
    </ligand>
</feature>
<feature type="binding site" evidence="1">
    <location>
        <position position="173"/>
    </location>
    <ligand>
        <name>substrate</name>
    </ligand>
</feature>
<feature type="binding site" evidence="1">
    <location>
        <position position="212"/>
    </location>
    <ligand>
        <name>substrate</name>
    </ligand>
</feature>
<feature type="binding site" evidence="1">
    <location>
        <begin position="233"/>
        <end position="234"/>
    </location>
    <ligand>
        <name>substrate</name>
    </ligand>
</feature>
<organism>
    <name type="scientific">Vibrio sp. (strain ANT-300)</name>
    <dbReference type="NCBI Taxonomy" id="127907"/>
    <lineage>
        <taxon>Bacteria</taxon>
        <taxon>Pseudomonadati</taxon>
        <taxon>Pseudomonadota</taxon>
        <taxon>Gammaproteobacteria</taxon>
        <taxon>Vibrionales</taxon>
        <taxon>Vibrionaceae</taxon>
        <taxon>Vibrio</taxon>
    </lineage>
</organism>
<accession>Q56738</accession>
<gene>
    <name evidence="1" type="primary">tpiA</name>
    <name type="synonym">tpi</name>
</gene>
<evidence type="ECO:0000255" key="1">
    <source>
        <dbReference type="HAMAP-Rule" id="MF_00147"/>
    </source>
</evidence>
<protein>
    <recommendedName>
        <fullName evidence="1">Triosephosphate isomerase</fullName>
        <shortName evidence="1">TIM</shortName>
        <shortName evidence="1">TPI</shortName>
        <ecNumber evidence="1">5.3.1.1</ecNumber>
    </recommendedName>
    <alternativeName>
        <fullName evidence="1">Triose-phosphate isomerase</fullName>
    </alternativeName>
</protein>
<sequence length="251" mass="26018">MRQALVMGNWKLNATKGSVEALINGLVDAAKDNATVEVAVCPPAVFIPQVEALTADTAITYGAQDCDVNTSGAFTGENSAVMLKEFGCKYTLVGHSERRVIHGESSEVVADKFAVTPENGLVPVLCIGETLEQFEAGETKAVVEAQLQAVVTKSGITSLNNAVIGYEPVWAIGTGKTATPEIAQEIPAHIRSWLAEQDAAVANKVQILYGGSVKPANSAELFGQADIDGGLVGGASLDAVEFSKVISGASA</sequence>
<proteinExistence type="inferred from homology"/>
<dbReference type="EC" id="5.3.1.1" evidence="1"/>
<dbReference type="EMBL" id="L27493">
    <property type="protein sequence ID" value="AAB48658.1"/>
    <property type="molecule type" value="Genomic_DNA"/>
</dbReference>
<dbReference type="PIR" id="S66473">
    <property type="entry name" value="S66473"/>
</dbReference>
<dbReference type="SMR" id="Q56738"/>
<dbReference type="UniPathway" id="UPA00109">
    <property type="reaction ID" value="UER00189"/>
</dbReference>
<dbReference type="UniPathway" id="UPA00138"/>
<dbReference type="GO" id="GO:0005829">
    <property type="term" value="C:cytosol"/>
    <property type="evidence" value="ECO:0007669"/>
    <property type="project" value="TreeGrafter"/>
</dbReference>
<dbReference type="GO" id="GO:0004807">
    <property type="term" value="F:triose-phosphate isomerase activity"/>
    <property type="evidence" value="ECO:0007669"/>
    <property type="project" value="UniProtKB-UniRule"/>
</dbReference>
<dbReference type="GO" id="GO:0006094">
    <property type="term" value="P:gluconeogenesis"/>
    <property type="evidence" value="ECO:0007669"/>
    <property type="project" value="UniProtKB-UniRule"/>
</dbReference>
<dbReference type="GO" id="GO:0046166">
    <property type="term" value="P:glyceraldehyde-3-phosphate biosynthetic process"/>
    <property type="evidence" value="ECO:0007669"/>
    <property type="project" value="TreeGrafter"/>
</dbReference>
<dbReference type="GO" id="GO:0019563">
    <property type="term" value="P:glycerol catabolic process"/>
    <property type="evidence" value="ECO:0007669"/>
    <property type="project" value="TreeGrafter"/>
</dbReference>
<dbReference type="GO" id="GO:0006096">
    <property type="term" value="P:glycolytic process"/>
    <property type="evidence" value="ECO:0007669"/>
    <property type="project" value="UniProtKB-UniRule"/>
</dbReference>
<dbReference type="CDD" id="cd00311">
    <property type="entry name" value="TIM"/>
    <property type="match status" value="1"/>
</dbReference>
<dbReference type="FunFam" id="3.20.20.70:FF:000020">
    <property type="entry name" value="Triosephosphate isomerase"/>
    <property type="match status" value="1"/>
</dbReference>
<dbReference type="Gene3D" id="3.20.20.70">
    <property type="entry name" value="Aldolase class I"/>
    <property type="match status" value="1"/>
</dbReference>
<dbReference type="HAMAP" id="MF_00147_B">
    <property type="entry name" value="TIM_B"/>
    <property type="match status" value="1"/>
</dbReference>
<dbReference type="InterPro" id="IPR013785">
    <property type="entry name" value="Aldolase_TIM"/>
</dbReference>
<dbReference type="InterPro" id="IPR035990">
    <property type="entry name" value="TIM_sf"/>
</dbReference>
<dbReference type="InterPro" id="IPR022896">
    <property type="entry name" value="TrioseP_Isoase_bac/euk"/>
</dbReference>
<dbReference type="InterPro" id="IPR000652">
    <property type="entry name" value="Triosephosphate_isomerase"/>
</dbReference>
<dbReference type="InterPro" id="IPR020861">
    <property type="entry name" value="Triosephosphate_isomerase_AS"/>
</dbReference>
<dbReference type="NCBIfam" id="TIGR00419">
    <property type="entry name" value="tim"/>
    <property type="match status" value="1"/>
</dbReference>
<dbReference type="PANTHER" id="PTHR21139">
    <property type="entry name" value="TRIOSEPHOSPHATE ISOMERASE"/>
    <property type="match status" value="1"/>
</dbReference>
<dbReference type="PANTHER" id="PTHR21139:SF42">
    <property type="entry name" value="TRIOSEPHOSPHATE ISOMERASE"/>
    <property type="match status" value="1"/>
</dbReference>
<dbReference type="Pfam" id="PF00121">
    <property type="entry name" value="TIM"/>
    <property type="match status" value="1"/>
</dbReference>
<dbReference type="SUPFAM" id="SSF51351">
    <property type="entry name" value="Triosephosphate isomerase (TIM)"/>
    <property type="match status" value="1"/>
</dbReference>
<dbReference type="PROSITE" id="PS00171">
    <property type="entry name" value="TIM_1"/>
    <property type="match status" value="1"/>
</dbReference>
<dbReference type="PROSITE" id="PS51440">
    <property type="entry name" value="TIM_2"/>
    <property type="match status" value="1"/>
</dbReference>
<reference key="1">
    <citation type="journal article" date="1995" name="Arch. Biochem. Biophys.">
        <title>A thermolabile triosephosphate isomerase from the psychrophile Vibrio sp. strain ANT-300.</title>
        <authorList>
            <person name="Adler E."/>
            <person name="Knowles J."/>
        </authorList>
    </citation>
    <scope>NUCLEOTIDE SEQUENCE [GENOMIC DNA]</scope>
</reference>